<comment type="function">
    <text evidence="1">Catalyzes the pyruvoyl-dependent decarboxylation of aspartate to produce beta-alanine.</text>
</comment>
<comment type="catalytic activity">
    <reaction evidence="1">
        <text>L-aspartate + H(+) = beta-alanine + CO2</text>
        <dbReference type="Rhea" id="RHEA:19497"/>
        <dbReference type="ChEBI" id="CHEBI:15378"/>
        <dbReference type="ChEBI" id="CHEBI:16526"/>
        <dbReference type="ChEBI" id="CHEBI:29991"/>
        <dbReference type="ChEBI" id="CHEBI:57966"/>
        <dbReference type="EC" id="4.1.1.11"/>
    </reaction>
</comment>
<comment type="cofactor">
    <cofactor evidence="1">
        <name>pyruvate</name>
        <dbReference type="ChEBI" id="CHEBI:15361"/>
    </cofactor>
    <text evidence="1">Binds 1 pyruvoyl group covalently per subunit.</text>
</comment>
<comment type="pathway">
    <text evidence="1">Cofactor biosynthesis; (R)-pantothenate biosynthesis; beta-alanine from L-aspartate: step 1/1.</text>
</comment>
<comment type="subunit">
    <text evidence="1">Heterooctamer of four alpha and four beta subunits.</text>
</comment>
<comment type="subcellular location">
    <subcellularLocation>
        <location evidence="1">Cytoplasm</location>
    </subcellularLocation>
</comment>
<comment type="PTM">
    <text evidence="1">Is synthesized initially as an inactive proenzyme, which is activated by self-cleavage at a specific serine bond to produce a beta-subunit with a hydroxyl group at its C-terminus and an alpha-subunit with a pyruvoyl group at its N-terminus.</text>
</comment>
<comment type="similarity">
    <text evidence="1">Belongs to the PanD family.</text>
</comment>
<reference key="1">
    <citation type="submission" date="2008-06" db="EMBL/GenBank/DDBJ databases">
        <title>Complete sequence of Chlorobaculum parvum NCIB 8327.</title>
        <authorList>
            <consortium name="US DOE Joint Genome Institute"/>
            <person name="Lucas S."/>
            <person name="Copeland A."/>
            <person name="Lapidus A."/>
            <person name="Glavina del Rio T."/>
            <person name="Dalin E."/>
            <person name="Tice H."/>
            <person name="Bruce D."/>
            <person name="Goodwin L."/>
            <person name="Pitluck S."/>
            <person name="Schmutz J."/>
            <person name="Larimer F."/>
            <person name="Land M."/>
            <person name="Hauser L."/>
            <person name="Kyrpides N."/>
            <person name="Mikhailova N."/>
            <person name="Zhao F."/>
            <person name="Li T."/>
            <person name="Liu Z."/>
            <person name="Overmann J."/>
            <person name="Bryant D.A."/>
            <person name="Richardson P."/>
        </authorList>
    </citation>
    <scope>NUCLEOTIDE SEQUENCE [LARGE SCALE GENOMIC DNA]</scope>
    <source>
        <strain>DSM 263 / NCIMB 8327</strain>
    </source>
</reference>
<sequence length="128" mass="14555">MKVHMLKSKIHNAIVTSGDLEYEGSITIDKELLEIADMMANEKVLVVNNNNGERFETYIIEGTRGLREIQLNGAAARCALPGDEIIIMAFAEMEPEEARNWQPMIVIVDRMNNPKRRHRVGKDNEYLG</sequence>
<feature type="chain" id="PRO_1000191946" description="Aspartate 1-decarboxylase beta chain" evidence="1">
    <location>
        <begin position="1"/>
        <end position="24"/>
    </location>
</feature>
<feature type="chain" id="PRO_1000191947" description="Aspartate 1-decarboxylase alpha chain" evidence="1">
    <location>
        <begin position="25"/>
        <end position="128"/>
    </location>
</feature>
<feature type="active site" description="Schiff-base intermediate with substrate; via pyruvic acid" evidence="1">
    <location>
        <position position="25"/>
    </location>
</feature>
<feature type="active site" description="Proton donor" evidence="1">
    <location>
        <position position="58"/>
    </location>
</feature>
<feature type="binding site" evidence="1">
    <location>
        <position position="57"/>
    </location>
    <ligand>
        <name>substrate</name>
    </ligand>
</feature>
<feature type="binding site" evidence="1">
    <location>
        <begin position="73"/>
        <end position="75"/>
    </location>
    <ligand>
        <name>substrate</name>
    </ligand>
</feature>
<feature type="modified residue" description="Pyruvic acid (Ser)" evidence="1">
    <location>
        <position position="25"/>
    </location>
</feature>
<evidence type="ECO:0000255" key="1">
    <source>
        <dbReference type="HAMAP-Rule" id="MF_00446"/>
    </source>
</evidence>
<gene>
    <name evidence="1" type="primary">panD</name>
    <name type="ordered locus">Cpar_1782</name>
</gene>
<proteinExistence type="inferred from homology"/>
<organism>
    <name type="scientific">Chlorobaculum parvum (strain DSM 263 / NCIMB 8327)</name>
    <name type="common">Chlorobium vibrioforme subsp. thiosulfatophilum</name>
    <dbReference type="NCBI Taxonomy" id="517417"/>
    <lineage>
        <taxon>Bacteria</taxon>
        <taxon>Pseudomonadati</taxon>
        <taxon>Chlorobiota</taxon>
        <taxon>Chlorobiia</taxon>
        <taxon>Chlorobiales</taxon>
        <taxon>Chlorobiaceae</taxon>
        <taxon>Chlorobaculum</taxon>
    </lineage>
</organism>
<accession>B3QQH1</accession>
<protein>
    <recommendedName>
        <fullName evidence="1">Aspartate 1-decarboxylase</fullName>
        <ecNumber evidence="1">4.1.1.11</ecNumber>
    </recommendedName>
    <alternativeName>
        <fullName evidence="1">Aspartate alpha-decarboxylase</fullName>
    </alternativeName>
    <component>
        <recommendedName>
            <fullName evidence="1">Aspartate 1-decarboxylase beta chain</fullName>
        </recommendedName>
    </component>
    <component>
        <recommendedName>
            <fullName evidence="1">Aspartate 1-decarboxylase alpha chain</fullName>
        </recommendedName>
    </component>
</protein>
<name>PAND_CHLP8</name>
<keyword id="KW-0068">Autocatalytic cleavage</keyword>
<keyword id="KW-0963">Cytoplasm</keyword>
<keyword id="KW-0210">Decarboxylase</keyword>
<keyword id="KW-0456">Lyase</keyword>
<keyword id="KW-0566">Pantothenate biosynthesis</keyword>
<keyword id="KW-0670">Pyruvate</keyword>
<keyword id="KW-0704">Schiff base</keyword>
<keyword id="KW-0865">Zymogen</keyword>
<dbReference type="EC" id="4.1.1.11" evidence="1"/>
<dbReference type="EMBL" id="CP001099">
    <property type="protein sequence ID" value="ACF12174.1"/>
    <property type="molecule type" value="Genomic_DNA"/>
</dbReference>
<dbReference type="RefSeq" id="WP_012503007.1">
    <property type="nucleotide sequence ID" value="NC_011027.1"/>
</dbReference>
<dbReference type="SMR" id="B3QQH1"/>
<dbReference type="STRING" id="517417.Cpar_1782"/>
<dbReference type="KEGG" id="cpc:Cpar_1782"/>
<dbReference type="eggNOG" id="COG0853">
    <property type="taxonomic scope" value="Bacteria"/>
</dbReference>
<dbReference type="HOGENOM" id="CLU_115305_2_0_10"/>
<dbReference type="OrthoDB" id="9803983at2"/>
<dbReference type="UniPathway" id="UPA00028">
    <property type="reaction ID" value="UER00002"/>
</dbReference>
<dbReference type="Proteomes" id="UP000008811">
    <property type="component" value="Chromosome"/>
</dbReference>
<dbReference type="GO" id="GO:0005829">
    <property type="term" value="C:cytosol"/>
    <property type="evidence" value="ECO:0007669"/>
    <property type="project" value="TreeGrafter"/>
</dbReference>
<dbReference type="GO" id="GO:0004068">
    <property type="term" value="F:aspartate 1-decarboxylase activity"/>
    <property type="evidence" value="ECO:0007669"/>
    <property type="project" value="UniProtKB-UniRule"/>
</dbReference>
<dbReference type="GO" id="GO:0006523">
    <property type="term" value="P:alanine biosynthetic process"/>
    <property type="evidence" value="ECO:0007669"/>
    <property type="project" value="InterPro"/>
</dbReference>
<dbReference type="GO" id="GO:0015940">
    <property type="term" value="P:pantothenate biosynthetic process"/>
    <property type="evidence" value="ECO:0007669"/>
    <property type="project" value="UniProtKB-UniRule"/>
</dbReference>
<dbReference type="CDD" id="cd06919">
    <property type="entry name" value="Asp_decarbox"/>
    <property type="match status" value="1"/>
</dbReference>
<dbReference type="Gene3D" id="2.40.40.20">
    <property type="match status" value="1"/>
</dbReference>
<dbReference type="HAMAP" id="MF_00446">
    <property type="entry name" value="PanD"/>
    <property type="match status" value="1"/>
</dbReference>
<dbReference type="InterPro" id="IPR009010">
    <property type="entry name" value="Asp_de-COase-like_dom_sf"/>
</dbReference>
<dbReference type="InterPro" id="IPR003190">
    <property type="entry name" value="Asp_decarbox"/>
</dbReference>
<dbReference type="NCBIfam" id="TIGR00223">
    <property type="entry name" value="panD"/>
    <property type="match status" value="1"/>
</dbReference>
<dbReference type="PANTHER" id="PTHR21012">
    <property type="entry name" value="ASPARTATE 1-DECARBOXYLASE"/>
    <property type="match status" value="1"/>
</dbReference>
<dbReference type="PANTHER" id="PTHR21012:SF0">
    <property type="entry name" value="ASPARTATE 1-DECARBOXYLASE"/>
    <property type="match status" value="1"/>
</dbReference>
<dbReference type="Pfam" id="PF02261">
    <property type="entry name" value="Asp_decarbox"/>
    <property type="match status" value="1"/>
</dbReference>
<dbReference type="PIRSF" id="PIRSF006246">
    <property type="entry name" value="Asp_decarbox"/>
    <property type="match status" value="1"/>
</dbReference>
<dbReference type="SUPFAM" id="SSF50692">
    <property type="entry name" value="ADC-like"/>
    <property type="match status" value="1"/>
</dbReference>